<feature type="chain" id="PRO_0000125245" description="Large ribosomal subunit protein uL22">
    <location>
        <begin position="1"/>
        <end position="121"/>
    </location>
</feature>
<accession>Q7U4J5</accession>
<name>RL22_PARMW</name>
<organism>
    <name type="scientific">Parasynechococcus marenigrum (strain WH8102)</name>
    <dbReference type="NCBI Taxonomy" id="84588"/>
    <lineage>
        <taxon>Bacteria</taxon>
        <taxon>Bacillati</taxon>
        <taxon>Cyanobacteriota</taxon>
        <taxon>Cyanophyceae</taxon>
        <taxon>Synechococcales</taxon>
        <taxon>Prochlorococcaceae</taxon>
        <taxon>Parasynechococcus</taxon>
        <taxon>Parasynechococcus marenigrum</taxon>
    </lineage>
</organism>
<dbReference type="EMBL" id="BX569694">
    <property type="protein sequence ID" value="CAE08587.1"/>
    <property type="molecule type" value="Genomic_DNA"/>
</dbReference>
<dbReference type="RefSeq" id="WP_011128930.1">
    <property type="nucleotide sequence ID" value="NC_005070.1"/>
</dbReference>
<dbReference type="SMR" id="Q7U4J5"/>
<dbReference type="STRING" id="84588.SYNW2072"/>
<dbReference type="KEGG" id="syw:SYNW2072"/>
<dbReference type="eggNOG" id="COG0091">
    <property type="taxonomic scope" value="Bacteria"/>
</dbReference>
<dbReference type="HOGENOM" id="CLU_083987_3_2_3"/>
<dbReference type="Proteomes" id="UP000001422">
    <property type="component" value="Chromosome"/>
</dbReference>
<dbReference type="GO" id="GO:0022625">
    <property type="term" value="C:cytosolic large ribosomal subunit"/>
    <property type="evidence" value="ECO:0007669"/>
    <property type="project" value="TreeGrafter"/>
</dbReference>
<dbReference type="GO" id="GO:0019843">
    <property type="term" value="F:rRNA binding"/>
    <property type="evidence" value="ECO:0007669"/>
    <property type="project" value="UniProtKB-UniRule"/>
</dbReference>
<dbReference type="GO" id="GO:0003735">
    <property type="term" value="F:structural constituent of ribosome"/>
    <property type="evidence" value="ECO:0007669"/>
    <property type="project" value="InterPro"/>
</dbReference>
<dbReference type="GO" id="GO:0006412">
    <property type="term" value="P:translation"/>
    <property type="evidence" value="ECO:0007669"/>
    <property type="project" value="UniProtKB-UniRule"/>
</dbReference>
<dbReference type="CDD" id="cd00336">
    <property type="entry name" value="Ribosomal_L22"/>
    <property type="match status" value="1"/>
</dbReference>
<dbReference type="Gene3D" id="3.90.470.10">
    <property type="entry name" value="Ribosomal protein L22/L17"/>
    <property type="match status" value="1"/>
</dbReference>
<dbReference type="HAMAP" id="MF_01331_B">
    <property type="entry name" value="Ribosomal_uL22_B"/>
    <property type="match status" value="1"/>
</dbReference>
<dbReference type="InterPro" id="IPR001063">
    <property type="entry name" value="Ribosomal_uL22"/>
</dbReference>
<dbReference type="InterPro" id="IPR005727">
    <property type="entry name" value="Ribosomal_uL22_bac/chlpt-type"/>
</dbReference>
<dbReference type="InterPro" id="IPR047867">
    <property type="entry name" value="Ribosomal_uL22_bac/org-type"/>
</dbReference>
<dbReference type="InterPro" id="IPR018260">
    <property type="entry name" value="Ribosomal_uL22_CS"/>
</dbReference>
<dbReference type="InterPro" id="IPR036394">
    <property type="entry name" value="Ribosomal_uL22_sf"/>
</dbReference>
<dbReference type="NCBIfam" id="TIGR01044">
    <property type="entry name" value="rplV_bact"/>
    <property type="match status" value="1"/>
</dbReference>
<dbReference type="PANTHER" id="PTHR13501">
    <property type="entry name" value="CHLOROPLAST 50S RIBOSOMAL PROTEIN L22-RELATED"/>
    <property type="match status" value="1"/>
</dbReference>
<dbReference type="PANTHER" id="PTHR13501:SF8">
    <property type="entry name" value="LARGE RIBOSOMAL SUBUNIT PROTEIN UL22M"/>
    <property type="match status" value="1"/>
</dbReference>
<dbReference type="Pfam" id="PF00237">
    <property type="entry name" value="Ribosomal_L22"/>
    <property type="match status" value="1"/>
</dbReference>
<dbReference type="SUPFAM" id="SSF54843">
    <property type="entry name" value="Ribosomal protein L22"/>
    <property type="match status" value="1"/>
</dbReference>
<dbReference type="PROSITE" id="PS00464">
    <property type="entry name" value="RIBOSOMAL_L22"/>
    <property type="match status" value="1"/>
</dbReference>
<proteinExistence type="inferred from homology"/>
<protein>
    <recommendedName>
        <fullName evidence="1">Large ribosomal subunit protein uL22</fullName>
    </recommendedName>
    <alternativeName>
        <fullName evidence="2">50S ribosomal protein L22</fullName>
    </alternativeName>
</protein>
<keyword id="KW-0687">Ribonucleoprotein</keyword>
<keyword id="KW-0689">Ribosomal protein</keyword>
<keyword id="KW-0694">RNA-binding</keyword>
<keyword id="KW-0699">rRNA-binding</keyword>
<comment type="function">
    <text evidence="1">This protein binds specifically to 23S rRNA; its binding is stimulated by other ribosomal proteins, e.g. L4, L17, and L20. It is important during the early stages of 50S assembly. It makes multiple contacts with different domains of the 23S rRNA in the assembled 50S subunit and ribosome (By similarity).</text>
</comment>
<comment type="function">
    <text evidence="1">The globular domain of the protein is located near the polypeptide exit tunnel on the outside of the subunit, while an extended beta-hairpin is found that lines the wall of the exit tunnel in the center of the 70S ribosome.</text>
</comment>
<comment type="subunit">
    <text evidence="1">Part of the 50S ribosomal subunit.</text>
</comment>
<comment type="similarity">
    <text evidence="1">Belongs to the universal ribosomal protein uL22 family.</text>
</comment>
<evidence type="ECO:0000255" key="1">
    <source>
        <dbReference type="HAMAP-Rule" id="MF_01331"/>
    </source>
</evidence>
<evidence type="ECO:0000305" key="2"/>
<gene>
    <name evidence="1" type="primary">rplV</name>
    <name evidence="1" type="synonym">rpl22</name>
    <name type="ordered locus">SYNW2072</name>
</gene>
<reference key="1">
    <citation type="journal article" date="2003" name="Nature">
        <title>The genome of a motile marine Synechococcus.</title>
        <authorList>
            <person name="Palenik B."/>
            <person name="Brahamsha B."/>
            <person name="Larimer F.W."/>
            <person name="Land M.L."/>
            <person name="Hauser L."/>
            <person name="Chain P."/>
            <person name="Lamerdin J.E."/>
            <person name="Regala W."/>
            <person name="Allen E.E."/>
            <person name="McCarren J."/>
            <person name="Paulsen I.T."/>
            <person name="Dufresne A."/>
            <person name="Partensky F."/>
            <person name="Webb E.A."/>
            <person name="Waterbury J."/>
        </authorList>
    </citation>
    <scope>NUCLEOTIDE SEQUENCE [LARGE SCALE GENOMIC DNA]</scope>
    <source>
        <strain>WH8102</strain>
    </source>
</reference>
<sequence length="121" mass="13212">MTTSSTTAPIAQAHGRFIRGSVSKVRRVLDQIRGRTYRDALIMLEFMPYRSTGPITKVLRSAVANAEHNLGLDPASLVISSASADMGPSMKRYRPRAQGRAFQIKKQTCHISIAVAAQPDS</sequence>